<feature type="chain" id="PRO_0000293976" description="Probable sulfate transport system permease protein cysT">
    <location>
        <begin position="1"/>
        <end position="270"/>
    </location>
</feature>
<feature type="transmembrane region" description="Helical" evidence="2">
    <location>
        <begin position="13"/>
        <end position="33"/>
    </location>
</feature>
<feature type="transmembrane region" description="Helical" evidence="2">
    <location>
        <begin position="61"/>
        <end position="81"/>
    </location>
</feature>
<feature type="transmembrane region" description="Helical" evidence="2">
    <location>
        <begin position="94"/>
        <end position="114"/>
    </location>
</feature>
<feature type="transmembrane region" description="Helical" evidence="2">
    <location>
        <begin position="138"/>
        <end position="158"/>
    </location>
</feature>
<feature type="transmembrane region" description="Helical" evidence="2">
    <location>
        <begin position="180"/>
        <end position="200"/>
    </location>
</feature>
<feature type="transmembrane region" description="Helical" evidence="2">
    <location>
        <begin position="208"/>
        <end position="228"/>
    </location>
</feature>
<feature type="transmembrane region" description="Helical" evidence="2">
    <location>
        <begin position="238"/>
        <end position="258"/>
    </location>
</feature>
<feature type="domain" description="ABC transmembrane type-1" evidence="2">
    <location>
        <begin position="55"/>
        <end position="256"/>
    </location>
</feature>
<reference key="1">
    <citation type="journal article" date="2006" name="BMC Biol.">
        <title>The complete plastid genome sequence of the parasitic green alga, Helicosporidium sp. is highly reduced and structured.</title>
        <authorList>
            <person name="de Koning A.P."/>
            <person name="Keeling P.J."/>
        </authorList>
    </citation>
    <scope>NUCLEOTIDE SEQUENCE [LARGE SCALE GENOMIC DNA]</scope>
</reference>
<protein>
    <recommendedName>
        <fullName>Probable sulfate transport system permease protein cysT</fullName>
    </recommendedName>
</protein>
<gene>
    <name type="primary">cysT</name>
</gene>
<comment type="function">
    <text evidence="1">Part of the ABC transporter complex cysAWTP (TC 3.A.1.6.1) involved in sulfate/thiosulfate import. Probably responsible for the translocation of the substrate across the membrane (By similarity).</text>
</comment>
<comment type="subcellular location">
    <subcellularLocation>
        <location evidence="3">Plastid membrane</location>
        <topology evidence="3">Multi-pass membrane protein</topology>
    </subcellularLocation>
</comment>
<comment type="similarity">
    <text evidence="3">Belongs to the binding-protein-dependent transport system permease family. CysTW subfamily.</text>
</comment>
<proteinExistence type="inferred from homology"/>
<organism>
    <name type="scientific">Helicosporidium sp. subsp. Simulium jonesii</name>
    <name type="common">Green alga</name>
    <dbReference type="NCBI Taxonomy" id="145475"/>
    <lineage>
        <taxon>Eukaryota</taxon>
        <taxon>Viridiplantae</taxon>
        <taxon>Chlorophyta</taxon>
        <taxon>core chlorophytes</taxon>
        <taxon>Trebouxiophyceae</taxon>
        <taxon>Chlorellales</taxon>
        <taxon>Chlorellaceae</taxon>
        <taxon>Helicosporidium</taxon>
    </lineage>
</organism>
<dbReference type="EMBL" id="DQ398104">
    <property type="protein sequence ID" value="ABD33967.1"/>
    <property type="molecule type" value="Genomic_DNA"/>
</dbReference>
<dbReference type="RefSeq" id="YP_635918.1">
    <property type="nucleotide sequence ID" value="NC_008100.1"/>
</dbReference>
<dbReference type="SMR" id="Q2EEX6"/>
<dbReference type="GeneID" id="4100436"/>
<dbReference type="GO" id="GO:0005886">
    <property type="term" value="C:plasma membrane"/>
    <property type="evidence" value="ECO:0007669"/>
    <property type="project" value="InterPro"/>
</dbReference>
<dbReference type="GO" id="GO:0042170">
    <property type="term" value="C:plastid membrane"/>
    <property type="evidence" value="ECO:0007669"/>
    <property type="project" value="UniProtKB-SubCell"/>
</dbReference>
<dbReference type="GO" id="GO:0015419">
    <property type="term" value="F:ABC-type sulfate transporter activity"/>
    <property type="evidence" value="ECO:0007669"/>
    <property type="project" value="InterPro"/>
</dbReference>
<dbReference type="CDD" id="cd06261">
    <property type="entry name" value="TM_PBP2"/>
    <property type="match status" value="1"/>
</dbReference>
<dbReference type="Gene3D" id="1.10.3720.10">
    <property type="entry name" value="MetI-like"/>
    <property type="match status" value="1"/>
</dbReference>
<dbReference type="InterPro" id="IPR011865">
    <property type="entry name" value="CysT_permease"/>
</dbReference>
<dbReference type="InterPro" id="IPR000515">
    <property type="entry name" value="MetI-like"/>
</dbReference>
<dbReference type="InterPro" id="IPR035906">
    <property type="entry name" value="MetI-like_sf"/>
</dbReference>
<dbReference type="InterPro" id="IPR005667">
    <property type="entry name" value="Sulph_transpt2"/>
</dbReference>
<dbReference type="NCBIfam" id="TIGR00969">
    <property type="entry name" value="3a0106s02"/>
    <property type="match status" value="1"/>
</dbReference>
<dbReference type="NCBIfam" id="TIGR02139">
    <property type="entry name" value="permease_CysT"/>
    <property type="match status" value="1"/>
</dbReference>
<dbReference type="PANTHER" id="PTHR30406">
    <property type="entry name" value="SULFATE TRANSPORT SYSTEM PERMEASE PROTEIN"/>
    <property type="match status" value="1"/>
</dbReference>
<dbReference type="PANTHER" id="PTHR30406:SF8">
    <property type="entry name" value="SULFATE TRANSPORT SYSTEM PERMEASE PROTEIN CYST"/>
    <property type="match status" value="1"/>
</dbReference>
<dbReference type="Pfam" id="PF00528">
    <property type="entry name" value="BPD_transp_1"/>
    <property type="match status" value="1"/>
</dbReference>
<dbReference type="SUPFAM" id="SSF161098">
    <property type="entry name" value="MetI-like"/>
    <property type="match status" value="1"/>
</dbReference>
<dbReference type="PROSITE" id="PS50928">
    <property type="entry name" value="ABC_TM1"/>
    <property type="match status" value="1"/>
</dbReference>
<keyword id="KW-0472">Membrane</keyword>
<keyword id="KW-0934">Plastid</keyword>
<keyword id="KW-0764">Sulfate transport</keyword>
<keyword id="KW-0812">Transmembrane</keyword>
<keyword id="KW-1133">Transmembrane helix</keyword>
<keyword id="KW-0813">Transport</keyword>
<sequence length="270" mass="29948">MGNFILHPIQSRLIVISYSILILILPLYALFSYASNASWSLILEKATDPIAVAAYTLTIKMALYTAIINTIFGFIIAWVLTRYNFSGKRIMDAIVDLPLALPTSVAGLALSTVFGRNGLFGHILDFYNYEIIYTKRGILLAMIFVSFPFSVRAIQPILKEINKEEEEAAWSLGSGPLETFKRFIFPIILPAILNGFTLTFSRSLSEFGSIVMVAGNLPLQDLVSSVLISQYLEQYDYIGACVISIIVLMLACSVLLFVQIIHSLVVVDSK</sequence>
<accession>Q2EEX6</accession>
<evidence type="ECO:0000250" key="1"/>
<evidence type="ECO:0000255" key="2">
    <source>
        <dbReference type="PROSITE-ProRule" id="PRU00441"/>
    </source>
</evidence>
<evidence type="ECO:0000305" key="3"/>
<geneLocation type="non-photosynthetic plastid"/>
<name>CYST_HELSJ</name>